<sequence length="153" mass="15998">MISQSTLFLFILLIIGLIAKNQSLTVAIGVLFLLKFTFLGDKVFPYLQTKGINLGVTVITIAVLVPIATGEIGFKQLGEAAKSYYAWIALASGVAVALLAKGGVQLLTTDPHITTALVFGTIIAVALFNGVAVGPLIGAGIAYAVMSIIQMFK</sequence>
<keyword id="KW-1003">Cell membrane</keyword>
<keyword id="KW-0472">Membrane</keyword>
<keyword id="KW-1185">Reference proteome</keyword>
<keyword id="KW-0812">Transmembrane</keyword>
<keyword id="KW-1133">Transmembrane helix</keyword>
<accession>Q81KZ4</accession>
<accession>Q6HSF1</accession>
<accession>Q6KLP6</accession>
<organism>
    <name type="scientific">Bacillus anthracis</name>
    <dbReference type="NCBI Taxonomy" id="1392"/>
    <lineage>
        <taxon>Bacteria</taxon>
        <taxon>Bacillati</taxon>
        <taxon>Bacillota</taxon>
        <taxon>Bacilli</taxon>
        <taxon>Bacillales</taxon>
        <taxon>Bacillaceae</taxon>
        <taxon>Bacillus</taxon>
        <taxon>Bacillus cereus group</taxon>
    </lineage>
</organism>
<reference key="1">
    <citation type="journal article" date="2003" name="Nature">
        <title>The genome sequence of Bacillus anthracis Ames and comparison to closely related bacteria.</title>
        <authorList>
            <person name="Read T.D."/>
            <person name="Peterson S.N."/>
            <person name="Tourasse N.J."/>
            <person name="Baillie L.W."/>
            <person name="Paulsen I.T."/>
            <person name="Nelson K.E."/>
            <person name="Tettelin H."/>
            <person name="Fouts D.E."/>
            <person name="Eisen J.A."/>
            <person name="Gill S.R."/>
            <person name="Holtzapple E.K."/>
            <person name="Okstad O.A."/>
            <person name="Helgason E."/>
            <person name="Rilstone J."/>
            <person name="Wu M."/>
            <person name="Kolonay J.F."/>
            <person name="Beanan M.J."/>
            <person name="Dodson R.J."/>
            <person name="Brinkac L.M."/>
            <person name="Gwinn M.L."/>
            <person name="DeBoy R.T."/>
            <person name="Madpu R."/>
            <person name="Daugherty S.C."/>
            <person name="Durkin A.S."/>
            <person name="Haft D.H."/>
            <person name="Nelson W.C."/>
            <person name="Peterson J.D."/>
            <person name="Pop M."/>
            <person name="Khouri H.M."/>
            <person name="Radune D."/>
            <person name="Benton J.L."/>
            <person name="Mahamoud Y."/>
            <person name="Jiang L."/>
            <person name="Hance I.R."/>
            <person name="Weidman J.F."/>
            <person name="Berry K.J."/>
            <person name="Plaut R.D."/>
            <person name="Wolf A.M."/>
            <person name="Watkins K.L."/>
            <person name="Nierman W.C."/>
            <person name="Hazen A."/>
            <person name="Cline R.T."/>
            <person name="Redmond C."/>
            <person name="Thwaite J.E."/>
            <person name="White O."/>
            <person name="Salzberg S.L."/>
            <person name="Thomason B."/>
            <person name="Friedlander A.M."/>
            <person name="Koehler T.M."/>
            <person name="Hanna P.C."/>
            <person name="Kolstoe A.-B."/>
            <person name="Fraser C.M."/>
        </authorList>
    </citation>
    <scope>NUCLEOTIDE SEQUENCE [LARGE SCALE GENOMIC DNA]</scope>
    <source>
        <strain>Ames / isolate Porton</strain>
    </source>
</reference>
<reference key="2">
    <citation type="submission" date="2004-01" db="EMBL/GenBank/DDBJ databases">
        <title>Complete genome sequence of Bacillus anthracis Sterne.</title>
        <authorList>
            <person name="Brettin T.S."/>
            <person name="Bruce D."/>
            <person name="Challacombe J.F."/>
            <person name="Gilna P."/>
            <person name="Han C."/>
            <person name="Hill K."/>
            <person name="Hitchcock P."/>
            <person name="Jackson P."/>
            <person name="Keim P."/>
            <person name="Longmire J."/>
            <person name="Lucas S."/>
            <person name="Okinaka R."/>
            <person name="Richardson P."/>
            <person name="Rubin E."/>
            <person name="Tice H."/>
        </authorList>
    </citation>
    <scope>NUCLEOTIDE SEQUENCE [LARGE SCALE GENOMIC DNA]</scope>
    <source>
        <strain>Sterne</strain>
    </source>
</reference>
<reference key="3">
    <citation type="journal article" date="2009" name="J. Bacteriol.">
        <title>The complete genome sequence of Bacillus anthracis Ames 'Ancestor'.</title>
        <authorList>
            <person name="Ravel J."/>
            <person name="Jiang L."/>
            <person name="Stanley S.T."/>
            <person name="Wilson M.R."/>
            <person name="Decker R.S."/>
            <person name="Read T.D."/>
            <person name="Worsham P."/>
            <person name="Keim P.S."/>
            <person name="Salzberg S.L."/>
            <person name="Fraser-Liggett C.M."/>
            <person name="Rasko D.A."/>
        </authorList>
    </citation>
    <scope>NUCLEOTIDE SEQUENCE [LARGE SCALE GENOMIC DNA]</scope>
    <source>
        <strain>Ames ancestor</strain>
    </source>
</reference>
<comment type="subcellular location">
    <subcellularLocation>
        <location evidence="1">Cell membrane</location>
        <topology evidence="1">Multi-pass membrane protein</topology>
    </subcellularLocation>
</comment>
<comment type="similarity">
    <text evidence="1">Belongs to the UPF0756 family.</text>
</comment>
<evidence type="ECO:0000255" key="1">
    <source>
        <dbReference type="HAMAP-Rule" id="MF_01874"/>
    </source>
</evidence>
<dbReference type="EMBL" id="AE016879">
    <property type="protein sequence ID" value="AAP28529.1"/>
    <property type="molecule type" value="Genomic_DNA"/>
</dbReference>
<dbReference type="EMBL" id="AE017334">
    <property type="protein sequence ID" value="AAT33959.1"/>
    <property type="molecule type" value="Genomic_DNA"/>
</dbReference>
<dbReference type="EMBL" id="AE017225">
    <property type="protein sequence ID" value="AAT56787.1"/>
    <property type="molecule type" value="Genomic_DNA"/>
</dbReference>
<dbReference type="RefSeq" id="NP_847043.1">
    <property type="nucleotide sequence ID" value="NC_003997.3"/>
</dbReference>
<dbReference type="RefSeq" id="WP_000625507.1">
    <property type="nucleotide sequence ID" value="NZ_WXXJ01000026.1"/>
</dbReference>
<dbReference type="RefSeq" id="YP_030737.1">
    <property type="nucleotide sequence ID" value="NC_005945.1"/>
</dbReference>
<dbReference type="DNASU" id="1083990"/>
<dbReference type="KEGG" id="ban:BA_4840"/>
<dbReference type="KEGG" id="bar:GBAA_4840"/>
<dbReference type="KEGG" id="bat:BAS4489"/>
<dbReference type="PATRIC" id="fig|198094.11.peg.4801"/>
<dbReference type="eggNOG" id="COG2707">
    <property type="taxonomic scope" value="Bacteria"/>
</dbReference>
<dbReference type="HOGENOM" id="CLU_125889_1_0_9"/>
<dbReference type="OMA" id="SPAGWIA"/>
<dbReference type="OrthoDB" id="80306at2"/>
<dbReference type="Proteomes" id="UP000000427">
    <property type="component" value="Chromosome"/>
</dbReference>
<dbReference type="Proteomes" id="UP000000594">
    <property type="component" value="Chromosome"/>
</dbReference>
<dbReference type="GO" id="GO:0005886">
    <property type="term" value="C:plasma membrane"/>
    <property type="evidence" value="ECO:0007669"/>
    <property type="project" value="UniProtKB-SubCell"/>
</dbReference>
<dbReference type="HAMAP" id="MF_01874">
    <property type="entry name" value="UPF0756"/>
    <property type="match status" value="1"/>
</dbReference>
<dbReference type="InterPro" id="IPR007382">
    <property type="entry name" value="UPF0756_TM"/>
</dbReference>
<dbReference type="PANTHER" id="PTHR38452">
    <property type="entry name" value="UPF0756 MEMBRANE PROTEIN YEAL"/>
    <property type="match status" value="1"/>
</dbReference>
<dbReference type="PANTHER" id="PTHR38452:SF1">
    <property type="entry name" value="UPF0756 MEMBRANE PROTEIN YEAL"/>
    <property type="match status" value="1"/>
</dbReference>
<dbReference type="Pfam" id="PF04284">
    <property type="entry name" value="DUF441"/>
    <property type="match status" value="1"/>
</dbReference>
<protein>
    <recommendedName>
        <fullName evidence="1">UPF0756 membrane protein BA_4840/GBAA_4840/BAS4489</fullName>
    </recommendedName>
</protein>
<feature type="chain" id="PRO_0000388818" description="UPF0756 membrane protein BA_4840/GBAA_4840/BAS4489">
    <location>
        <begin position="1"/>
        <end position="153"/>
    </location>
</feature>
<feature type="transmembrane region" description="Helical" evidence="1">
    <location>
        <begin position="8"/>
        <end position="28"/>
    </location>
</feature>
<feature type="transmembrane region" description="Helical" evidence="1">
    <location>
        <begin position="54"/>
        <end position="74"/>
    </location>
</feature>
<feature type="transmembrane region" description="Helical" evidence="1">
    <location>
        <begin position="87"/>
        <end position="107"/>
    </location>
</feature>
<feature type="transmembrane region" description="Helical" evidence="1">
    <location>
        <begin position="117"/>
        <end position="137"/>
    </location>
</feature>
<proteinExistence type="inferred from homology"/>
<name>Y4489_BACAN</name>
<gene>
    <name type="ordered locus">BA_4840</name>
    <name type="ordered locus">GBAA_4840</name>
    <name type="ordered locus">BAS4489</name>
</gene>